<organism>
    <name type="scientific">Paraburkholderia phytofirmans (strain DSM 17436 / LMG 22146 / PsJN)</name>
    <name type="common">Burkholderia phytofirmans</name>
    <dbReference type="NCBI Taxonomy" id="398527"/>
    <lineage>
        <taxon>Bacteria</taxon>
        <taxon>Pseudomonadati</taxon>
        <taxon>Pseudomonadota</taxon>
        <taxon>Betaproteobacteria</taxon>
        <taxon>Burkholderiales</taxon>
        <taxon>Burkholderiaceae</taxon>
        <taxon>Paraburkholderia</taxon>
    </lineage>
</organism>
<protein>
    <recommendedName>
        <fullName evidence="1">Flagellar brake protein YcgR 2</fullName>
    </recommendedName>
    <alternativeName>
        <fullName evidence="1">Cyclic di-GMP binding protein YcgR 2</fullName>
    </alternativeName>
</protein>
<evidence type="ECO:0000255" key="1">
    <source>
        <dbReference type="HAMAP-Rule" id="MF_01457"/>
    </source>
</evidence>
<proteinExistence type="inferred from homology"/>
<feature type="chain" id="PRO_0000395268" description="Flagellar brake protein YcgR 2">
    <location>
        <begin position="1"/>
        <end position="257"/>
    </location>
</feature>
<feature type="domain" description="PilZ" evidence="1">
    <location>
        <begin position="131"/>
        <end position="244"/>
    </location>
</feature>
<reference key="1">
    <citation type="journal article" date="2011" name="J. Bacteriol.">
        <title>Complete genome sequence of the plant growth-promoting endophyte Burkholderia phytofirmans strain PsJN.</title>
        <authorList>
            <person name="Weilharter A."/>
            <person name="Mitter B."/>
            <person name="Shin M.V."/>
            <person name="Chain P.S."/>
            <person name="Nowak J."/>
            <person name="Sessitsch A."/>
        </authorList>
    </citation>
    <scope>NUCLEOTIDE SEQUENCE [LARGE SCALE GENOMIC DNA]</scope>
    <source>
        <strain>DSM 17436 / LMG 22146 / PsJN</strain>
    </source>
</reference>
<sequence>MIADLSLDADVAEQTQQTLGADSNFAQRHPLQIAVCLRQLVAGQDFVTVEFGGRQIVTQILDVDSRNARFVFDAGSVADDNDALPSARQLTFRSLPGGIRTEFTTFDATPTQFDGLPAFEAPLPTVLHYVQRREFFRVQTPVLDPYIASGRYADGGSFRLELLDLSLGGIALKTADERFGSLERGTVLRDVALQLGGFGMLRLDLEIVAPRQVSTAKGDRRFVIGCKFVATPGPAERTLQRVVTQLETRRQALTPRR</sequence>
<gene>
    <name evidence="1" type="primary">ycgR2</name>
    <name type="ordered locus">Bphyt_4582</name>
</gene>
<comment type="function">
    <text evidence="1">Acts as a flagellar brake, regulating swimming and swarming in a bis-(3'-5') cyclic diguanylic acid (c-di-GMP)-dependent manner. Binds 1 c-di-GMP dimer per subunit. Increasing levels of c-di-GMP lead to decreased motility.</text>
</comment>
<comment type="subunit">
    <text evidence="1">Monomer. Interacts with the flagellar basal bodies.</text>
</comment>
<comment type="subcellular location">
    <subcellularLocation>
        <location evidence="1">Bacterial flagellum basal body</location>
    </subcellularLocation>
</comment>
<comment type="similarity">
    <text evidence="1">Belongs to the YcgR family.</text>
</comment>
<keyword id="KW-0975">Bacterial flagellum</keyword>
<keyword id="KW-0973">c-di-GMP</keyword>
<keyword id="KW-0547">Nucleotide-binding</keyword>
<dbReference type="EMBL" id="CP001053">
    <property type="protein sequence ID" value="ACD18955.1"/>
    <property type="molecule type" value="Genomic_DNA"/>
</dbReference>
<dbReference type="RefSeq" id="WP_012426469.1">
    <property type="nucleotide sequence ID" value="NC_010676.1"/>
</dbReference>
<dbReference type="SMR" id="B2TD41"/>
<dbReference type="STRING" id="398527.Bphyt_4582"/>
<dbReference type="KEGG" id="bpy:Bphyt_4582"/>
<dbReference type="eggNOG" id="COG5581">
    <property type="taxonomic scope" value="Bacteria"/>
</dbReference>
<dbReference type="HOGENOM" id="CLU_086025_0_0_4"/>
<dbReference type="OrthoDB" id="5572581at2"/>
<dbReference type="Proteomes" id="UP000001739">
    <property type="component" value="Chromosome 2"/>
</dbReference>
<dbReference type="GO" id="GO:0009425">
    <property type="term" value="C:bacterial-type flagellum basal body"/>
    <property type="evidence" value="ECO:0007669"/>
    <property type="project" value="UniProtKB-SubCell"/>
</dbReference>
<dbReference type="GO" id="GO:0035438">
    <property type="term" value="F:cyclic-di-GMP binding"/>
    <property type="evidence" value="ECO:0007669"/>
    <property type="project" value="UniProtKB-UniRule"/>
</dbReference>
<dbReference type="GO" id="GO:0071973">
    <property type="term" value="P:bacterial-type flagellum-dependent cell motility"/>
    <property type="evidence" value="ECO:0007669"/>
    <property type="project" value="UniProtKB-UniRule"/>
</dbReference>
<dbReference type="GO" id="GO:0071945">
    <property type="term" value="P:regulation of bacterial-type flagellum-dependent cell motility by regulation of motor speed"/>
    <property type="evidence" value="ECO:0007669"/>
    <property type="project" value="UniProtKB-UniRule"/>
</dbReference>
<dbReference type="Gene3D" id="2.30.110.10">
    <property type="entry name" value="Electron Transport, Fmn-binding Protein, Chain A"/>
    <property type="match status" value="1"/>
</dbReference>
<dbReference type="Gene3D" id="2.40.10.220">
    <property type="entry name" value="predicted glycosyltransferase like domains"/>
    <property type="match status" value="1"/>
</dbReference>
<dbReference type="HAMAP" id="MF_01457">
    <property type="entry name" value="YcgR"/>
    <property type="match status" value="1"/>
</dbReference>
<dbReference type="InterPro" id="IPR009875">
    <property type="entry name" value="PilZ_domain"/>
</dbReference>
<dbReference type="InterPro" id="IPR012349">
    <property type="entry name" value="Split_barrel_FMN-bd"/>
</dbReference>
<dbReference type="InterPro" id="IPR023787">
    <property type="entry name" value="T3SS_YcgR"/>
</dbReference>
<dbReference type="InterPro" id="IPR009926">
    <property type="entry name" value="T3SS_YcgR_PilZN"/>
</dbReference>
<dbReference type="Pfam" id="PF07238">
    <property type="entry name" value="PilZ"/>
    <property type="match status" value="1"/>
</dbReference>
<dbReference type="Pfam" id="PF07317">
    <property type="entry name" value="PilZN"/>
    <property type="match status" value="1"/>
</dbReference>
<dbReference type="SUPFAM" id="SSF141371">
    <property type="entry name" value="PilZ domain-like"/>
    <property type="match status" value="1"/>
</dbReference>
<accession>B2TD41</accession>
<name>YCGR2_PARPJ</name>